<feature type="chain" id="PRO_0000382339" description="Glutamate-1-semialdehyde 2,1-aminomutase 2">
    <location>
        <begin position="1"/>
        <end position="430"/>
    </location>
</feature>
<feature type="modified residue" description="N6-(pyridoxal phosphate)lysine" evidence="1">
    <location>
        <position position="269"/>
    </location>
</feature>
<organism>
    <name type="scientific">Lysinibacillus sphaericus (strain C3-41)</name>
    <dbReference type="NCBI Taxonomy" id="444177"/>
    <lineage>
        <taxon>Bacteria</taxon>
        <taxon>Bacillati</taxon>
        <taxon>Bacillota</taxon>
        <taxon>Bacilli</taxon>
        <taxon>Bacillales</taxon>
        <taxon>Bacillaceae</taxon>
        <taxon>Lysinibacillus</taxon>
    </lineage>
</organism>
<proteinExistence type="inferred from homology"/>
<name>GSA2_LYSSC</name>
<keyword id="KW-0963">Cytoplasm</keyword>
<keyword id="KW-0413">Isomerase</keyword>
<keyword id="KW-0627">Porphyrin biosynthesis</keyword>
<keyword id="KW-0663">Pyridoxal phosphate</keyword>
<gene>
    <name evidence="1" type="primary">hemL2</name>
    <name type="ordered locus">Bsph_3967</name>
</gene>
<evidence type="ECO:0000255" key="1">
    <source>
        <dbReference type="HAMAP-Rule" id="MF_00375"/>
    </source>
</evidence>
<reference key="1">
    <citation type="journal article" date="2008" name="J. Bacteriol.">
        <title>Complete genome sequence of the mosquitocidal bacterium Bacillus sphaericus C3-41 and comparison with those of closely related Bacillus species.</title>
        <authorList>
            <person name="Hu X."/>
            <person name="Fan W."/>
            <person name="Han B."/>
            <person name="Liu H."/>
            <person name="Zheng D."/>
            <person name="Li Q."/>
            <person name="Dong W."/>
            <person name="Yan J."/>
            <person name="Gao M."/>
            <person name="Berry C."/>
            <person name="Yuan Z."/>
        </authorList>
    </citation>
    <scope>NUCLEOTIDE SEQUENCE [LARGE SCALE GENOMIC DNA]</scope>
    <source>
        <strain>C3-41</strain>
    </source>
</reference>
<dbReference type="EC" id="5.4.3.8" evidence="1"/>
<dbReference type="EMBL" id="CP000817">
    <property type="protein sequence ID" value="ACA41435.1"/>
    <property type="molecule type" value="Genomic_DNA"/>
</dbReference>
<dbReference type="SMR" id="B1HVD3"/>
<dbReference type="EnsemblBacteria" id="ACA41435">
    <property type="protein sequence ID" value="ACA41435"/>
    <property type="gene ID" value="Bsph_3967"/>
</dbReference>
<dbReference type="KEGG" id="lsp:Bsph_3967"/>
<dbReference type="HOGENOM" id="CLU_016922_1_5_9"/>
<dbReference type="UniPathway" id="UPA00251">
    <property type="reaction ID" value="UER00317"/>
</dbReference>
<dbReference type="Proteomes" id="UP000002164">
    <property type="component" value="Chromosome"/>
</dbReference>
<dbReference type="GO" id="GO:0005737">
    <property type="term" value="C:cytoplasm"/>
    <property type="evidence" value="ECO:0007669"/>
    <property type="project" value="UniProtKB-SubCell"/>
</dbReference>
<dbReference type="GO" id="GO:0042286">
    <property type="term" value="F:glutamate-1-semialdehyde 2,1-aminomutase activity"/>
    <property type="evidence" value="ECO:0007669"/>
    <property type="project" value="UniProtKB-UniRule"/>
</dbReference>
<dbReference type="GO" id="GO:0030170">
    <property type="term" value="F:pyridoxal phosphate binding"/>
    <property type="evidence" value="ECO:0007669"/>
    <property type="project" value="InterPro"/>
</dbReference>
<dbReference type="GO" id="GO:0008483">
    <property type="term" value="F:transaminase activity"/>
    <property type="evidence" value="ECO:0007669"/>
    <property type="project" value="InterPro"/>
</dbReference>
<dbReference type="GO" id="GO:0006782">
    <property type="term" value="P:protoporphyrinogen IX biosynthetic process"/>
    <property type="evidence" value="ECO:0007669"/>
    <property type="project" value="UniProtKB-UniRule"/>
</dbReference>
<dbReference type="CDD" id="cd00610">
    <property type="entry name" value="OAT_like"/>
    <property type="match status" value="1"/>
</dbReference>
<dbReference type="FunFam" id="3.40.640.10:FF:000021">
    <property type="entry name" value="Glutamate-1-semialdehyde 2,1-aminomutase"/>
    <property type="match status" value="1"/>
</dbReference>
<dbReference type="Gene3D" id="3.90.1150.10">
    <property type="entry name" value="Aspartate Aminotransferase, domain 1"/>
    <property type="match status" value="1"/>
</dbReference>
<dbReference type="Gene3D" id="3.40.640.10">
    <property type="entry name" value="Type I PLP-dependent aspartate aminotransferase-like (Major domain)"/>
    <property type="match status" value="1"/>
</dbReference>
<dbReference type="HAMAP" id="MF_00375">
    <property type="entry name" value="HemL_aminotrans_3"/>
    <property type="match status" value="1"/>
</dbReference>
<dbReference type="InterPro" id="IPR004639">
    <property type="entry name" value="4pyrrol_synth_GluAld_NH2Trfase"/>
</dbReference>
<dbReference type="InterPro" id="IPR005814">
    <property type="entry name" value="Aminotrans_3"/>
</dbReference>
<dbReference type="InterPro" id="IPR049704">
    <property type="entry name" value="Aminotrans_3_PPA_site"/>
</dbReference>
<dbReference type="InterPro" id="IPR015424">
    <property type="entry name" value="PyrdxlP-dep_Trfase"/>
</dbReference>
<dbReference type="InterPro" id="IPR015421">
    <property type="entry name" value="PyrdxlP-dep_Trfase_major"/>
</dbReference>
<dbReference type="InterPro" id="IPR015422">
    <property type="entry name" value="PyrdxlP-dep_Trfase_small"/>
</dbReference>
<dbReference type="NCBIfam" id="TIGR00713">
    <property type="entry name" value="hemL"/>
    <property type="match status" value="1"/>
</dbReference>
<dbReference type="NCBIfam" id="NF000818">
    <property type="entry name" value="PRK00062.1"/>
    <property type="match status" value="1"/>
</dbReference>
<dbReference type="PANTHER" id="PTHR43713">
    <property type="entry name" value="GLUTAMATE-1-SEMIALDEHYDE 2,1-AMINOMUTASE"/>
    <property type="match status" value="1"/>
</dbReference>
<dbReference type="PANTHER" id="PTHR43713:SF3">
    <property type="entry name" value="GLUTAMATE-1-SEMIALDEHYDE 2,1-AMINOMUTASE 1, CHLOROPLASTIC-RELATED"/>
    <property type="match status" value="1"/>
</dbReference>
<dbReference type="Pfam" id="PF00202">
    <property type="entry name" value="Aminotran_3"/>
    <property type="match status" value="1"/>
</dbReference>
<dbReference type="SUPFAM" id="SSF53383">
    <property type="entry name" value="PLP-dependent transferases"/>
    <property type="match status" value="1"/>
</dbReference>
<dbReference type="PROSITE" id="PS00600">
    <property type="entry name" value="AA_TRANSFER_CLASS_3"/>
    <property type="match status" value="1"/>
</dbReference>
<comment type="catalytic activity">
    <reaction evidence="1">
        <text>(S)-4-amino-5-oxopentanoate = 5-aminolevulinate</text>
        <dbReference type="Rhea" id="RHEA:14265"/>
        <dbReference type="ChEBI" id="CHEBI:57501"/>
        <dbReference type="ChEBI" id="CHEBI:356416"/>
        <dbReference type="EC" id="5.4.3.8"/>
    </reaction>
</comment>
<comment type="cofactor">
    <cofactor evidence="1">
        <name>pyridoxal 5'-phosphate</name>
        <dbReference type="ChEBI" id="CHEBI:597326"/>
    </cofactor>
</comment>
<comment type="pathway">
    <text evidence="1">Porphyrin-containing compound metabolism; protoporphyrin-IX biosynthesis; 5-aminolevulinate from L-glutamyl-tRNA(Glu): step 2/2.</text>
</comment>
<comment type="subunit">
    <text evidence="1">Homodimer.</text>
</comment>
<comment type="subcellular location">
    <subcellularLocation>
        <location evidence="1">Cytoplasm</location>
    </subcellularLocation>
</comment>
<comment type="similarity">
    <text evidence="1">Belongs to the class-III pyridoxal-phosphate-dependent aminotransferase family. HemL subfamily.</text>
</comment>
<accession>B1HVD3</accession>
<protein>
    <recommendedName>
        <fullName evidence="1">Glutamate-1-semialdehyde 2,1-aminomutase 2</fullName>
        <shortName evidence="1">GSA 2</shortName>
        <ecNumber evidence="1">5.4.3.8</ecNumber>
    </recommendedName>
    <alternativeName>
        <fullName evidence="1">Glutamate-1-semialdehyde aminotransferase 2</fullName>
        <shortName evidence="1">GSA-AT 2</shortName>
    </alternativeName>
</protein>
<sequence length="430" mass="46007">MTRSYEKSKQAYAEAVQLMPGGVNSPVRAFKSVNMDPIFMESGHGAIIKDIDGNEYIDYVLSWGPLILGHTHPEVVKAIAETAAKGSSFGAPTYTENRLAQLVLDRLPGMEMIRFVSSGTEATMSALRVARGVTGRDKILKFEGSYHGHGDSLLIKAGSGVATLGLPDSPGVPADVARNTLTVAYNDLEGAKAVFEKFGAELAAVIVEPVAGNMGVVPPQSGFLEGLRELTSTHGSLLIFDEVMTGFRVDYGCAQGYFGVTPDITTLGKVIGGGLPVGAFAGTKKIMEQVAPAGPIYQAGTLSGNPLAMTAGYETLSRLDRSTYEHFKQLGDQLEAGFREAATKYNIPHTVNRAGSMIGFFFTNEEVIDFATAKSSDLALFAEYFRLMAEEGIFLPPSQFEGLFISTAHTEEHIAKTVAAFHKVFAQLAK</sequence>